<gene>
    <name type="ordered locus">SYNPCC7002_A1640</name>
</gene>
<dbReference type="EMBL" id="CP000951">
    <property type="protein sequence ID" value="ACA99630.1"/>
    <property type="molecule type" value="Genomic_DNA"/>
</dbReference>
<dbReference type="RefSeq" id="WP_012307253.1">
    <property type="nucleotide sequence ID" value="NZ_JAHHPU010000002.1"/>
</dbReference>
<dbReference type="SMR" id="B1XP37"/>
<dbReference type="STRING" id="32049.SYNPCC7002_A1640"/>
<dbReference type="KEGG" id="syp:SYNPCC7002_A1640"/>
<dbReference type="eggNOG" id="COG0217">
    <property type="taxonomic scope" value="Bacteria"/>
</dbReference>
<dbReference type="HOGENOM" id="CLU_062974_1_0_3"/>
<dbReference type="Proteomes" id="UP000001688">
    <property type="component" value="Chromosome"/>
</dbReference>
<dbReference type="GO" id="GO:0005829">
    <property type="term" value="C:cytosol"/>
    <property type="evidence" value="ECO:0007669"/>
    <property type="project" value="TreeGrafter"/>
</dbReference>
<dbReference type="GO" id="GO:0003677">
    <property type="term" value="F:DNA binding"/>
    <property type="evidence" value="ECO:0007669"/>
    <property type="project" value="UniProtKB-UniRule"/>
</dbReference>
<dbReference type="GO" id="GO:0006355">
    <property type="term" value="P:regulation of DNA-templated transcription"/>
    <property type="evidence" value="ECO:0007669"/>
    <property type="project" value="UniProtKB-UniRule"/>
</dbReference>
<dbReference type="FunFam" id="1.10.10.200:FF:000002">
    <property type="entry name" value="Probable transcriptional regulatory protein CLM62_37755"/>
    <property type="match status" value="1"/>
</dbReference>
<dbReference type="Gene3D" id="1.10.10.200">
    <property type="match status" value="1"/>
</dbReference>
<dbReference type="Gene3D" id="3.30.70.980">
    <property type="match status" value="2"/>
</dbReference>
<dbReference type="HAMAP" id="MF_00693">
    <property type="entry name" value="Transcrip_reg_TACO1"/>
    <property type="match status" value="1"/>
</dbReference>
<dbReference type="InterPro" id="IPR017856">
    <property type="entry name" value="Integrase-like_N"/>
</dbReference>
<dbReference type="InterPro" id="IPR048300">
    <property type="entry name" value="TACO1_YebC-like_2nd/3rd_dom"/>
</dbReference>
<dbReference type="InterPro" id="IPR049083">
    <property type="entry name" value="TACO1_YebC_N"/>
</dbReference>
<dbReference type="InterPro" id="IPR002876">
    <property type="entry name" value="Transcrip_reg_TACO1-like"/>
</dbReference>
<dbReference type="InterPro" id="IPR026564">
    <property type="entry name" value="Transcrip_reg_TACO1-like_dom3"/>
</dbReference>
<dbReference type="InterPro" id="IPR029072">
    <property type="entry name" value="YebC-like"/>
</dbReference>
<dbReference type="NCBIfam" id="NF001030">
    <property type="entry name" value="PRK00110.1"/>
    <property type="match status" value="1"/>
</dbReference>
<dbReference type="NCBIfam" id="NF009044">
    <property type="entry name" value="PRK12378.1"/>
    <property type="match status" value="1"/>
</dbReference>
<dbReference type="NCBIfam" id="TIGR01033">
    <property type="entry name" value="YebC/PmpR family DNA-binding transcriptional regulator"/>
    <property type="match status" value="1"/>
</dbReference>
<dbReference type="PANTHER" id="PTHR12532:SF6">
    <property type="entry name" value="TRANSCRIPTIONAL REGULATORY PROTEIN YEBC-RELATED"/>
    <property type="match status" value="1"/>
</dbReference>
<dbReference type="PANTHER" id="PTHR12532">
    <property type="entry name" value="TRANSLATIONAL ACTIVATOR OF CYTOCHROME C OXIDASE 1"/>
    <property type="match status" value="1"/>
</dbReference>
<dbReference type="Pfam" id="PF20772">
    <property type="entry name" value="TACO1_YebC_N"/>
    <property type="match status" value="1"/>
</dbReference>
<dbReference type="Pfam" id="PF01709">
    <property type="entry name" value="Transcrip_reg"/>
    <property type="match status" value="1"/>
</dbReference>
<dbReference type="SUPFAM" id="SSF75625">
    <property type="entry name" value="YebC-like"/>
    <property type="match status" value="1"/>
</dbReference>
<accession>B1XP37</accession>
<keyword id="KW-0963">Cytoplasm</keyword>
<keyword id="KW-0238">DNA-binding</keyword>
<keyword id="KW-1185">Reference proteome</keyword>
<keyword id="KW-0804">Transcription</keyword>
<keyword id="KW-0805">Transcription regulation</keyword>
<sequence length="250" mass="27053">MAGHSKWANIKRQKARVDAKKGKTFTQLSRAIIVAARHGLPDPAGNFQLRTAIEKAKAAGIPNENIERAIAKGAGTYNDGEANYEEIRYEGYGAGGVAILIEALTDNRNRTAADLRSAFSKNGGNLGETGCVSWMFSHKGVVTLTGEIDEEALLEASLIGEAEGYSAIEDSDEVEVLSAVENLEHLNQTLQDAGFTVKEAELRWFPETEMNLTDEVQIQTILKMIETIEALDDVQTVTSNLAIAPAFATL</sequence>
<reference key="1">
    <citation type="submission" date="2008-02" db="EMBL/GenBank/DDBJ databases">
        <title>Complete sequence of Synechococcus sp. PCC 7002.</title>
        <authorList>
            <person name="Li T."/>
            <person name="Zhao J."/>
            <person name="Zhao C."/>
            <person name="Liu Z."/>
            <person name="Zhao F."/>
            <person name="Marquardt J."/>
            <person name="Nomura C.T."/>
            <person name="Persson S."/>
            <person name="Detter J.C."/>
            <person name="Richardson P.M."/>
            <person name="Lanz C."/>
            <person name="Schuster S.C."/>
            <person name="Wang J."/>
            <person name="Li S."/>
            <person name="Huang X."/>
            <person name="Cai T."/>
            <person name="Yu Z."/>
            <person name="Luo J."/>
            <person name="Zhao J."/>
            <person name="Bryant D.A."/>
        </authorList>
    </citation>
    <scope>NUCLEOTIDE SEQUENCE [LARGE SCALE GENOMIC DNA]</scope>
    <source>
        <strain>ATCC 27264 / PCC 7002 / PR-6</strain>
    </source>
</reference>
<name>Y1640_PICP2</name>
<proteinExistence type="inferred from homology"/>
<evidence type="ECO:0000255" key="1">
    <source>
        <dbReference type="HAMAP-Rule" id="MF_00693"/>
    </source>
</evidence>
<organism>
    <name type="scientific">Picosynechococcus sp. (strain ATCC 27264 / PCC 7002 / PR-6)</name>
    <name type="common">Agmenellum quadruplicatum</name>
    <dbReference type="NCBI Taxonomy" id="32049"/>
    <lineage>
        <taxon>Bacteria</taxon>
        <taxon>Bacillati</taxon>
        <taxon>Cyanobacteriota</taxon>
        <taxon>Cyanophyceae</taxon>
        <taxon>Oscillatoriophycideae</taxon>
        <taxon>Chroococcales</taxon>
        <taxon>Geminocystaceae</taxon>
        <taxon>Picosynechococcus</taxon>
    </lineage>
</organism>
<feature type="chain" id="PRO_1000132245" description="Probable transcriptional regulatory protein SYNPCC7002_A1640">
    <location>
        <begin position="1"/>
        <end position="250"/>
    </location>
</feature>
<protein>
    <recommendedName>
        <fullName evidence="1">Probable transcriptional regulatory protein SYNPCC7002_A1640</fullName>
    </recommendedName>
</protein>
<comment type="subcellular location">
    <subcellularLocation>
        <location evidence="1">Cytoplasm</location>
    </subcellularLocation>
</comment>
<comment type="similarity">
    <text evidence="1">Belongs to the TACO1 family.</text>
</comment>